<proteinExistence type="evidence at protein level"/>
<comment type="subcellular location">
    <subcellularLocation>
        <location evidence="1">Secreted</location>
        <location evidence="1">Cell wall</location>
    </subcellularLocation>
</comment>
<sequence length="15" mass="1823">KSTDFDYNNKKANYD</sequence>
<accession>P80802</accession>
<protein>
    <recommendedName>
        <fullName>22 kDa cell wall protein</fullName>
    </recommendedName>
</protein>
<keyword id="KW-0134">Cell wall</keyword>
<keyword id="KW-0903">Direct protein sequencing</keyword>
<keyword id="KW-1185">Reference proteome</keyword>
<keyword id="KW-0964">Secreted</keyword>
<reference evidence="3" key="1">
    <citation type="journal article" date="1997" name="J. Biol. Chem.">
        <title>Differential extraction and protein sequencing reveals major differences in patterns of primary cell wall proteins from plants.</title>
        <authorList>
            <person name="Robertson D."/>
            <person name="Mitchell G.P."/>
            <person name="Gilroy J.S."/>
            <person name="Gerrish C."/>
            <person name="Bolwell G.P."/>
            <person name="Slabas A.R."/>
        </authorList>
    </citation>
    <scope>PROTEIN SEQUENCE</scope>
    <scope>SUBCELLULAR LOCATION</scope>
</reference>
<feature type="chain" id="PRO_0000079635" description="22 kDa cell wall protein">
    <location>
        <begin position="1"/>
        <end position="15" status="greater than"/>
    </location>
</feature>
<feature type="non-terminal residue" evidence="2">
    <location>
        <position position="15"/>
    </location>
</feature>
<organism>
    <name type="scientific">Solanum lycopersicum</name>
    <name type="common">Tomato</name>
    <name type="synonym">Lycopersicon esculentum</name>
    <dbReference type="NCBI Taxonomy" id="4081"/>
    <lineage>
        <taxon>Eukaryota</taxon>
        <taxon>Viridiplantae</taxon>
        <taxon>Streptophyta</taxon>
        <taxon>Embryophyta</taxon>
        <taxon>Tracheophyta</taxon>
        <taxon>Spermatophyta</taxon>
        <taxon>Magnoliopsida</taxon>
        <taxon>eudicotyledons</taxon>
        <taxon>Gunneridae</taxon>
        <taxon>Pentapetalae</taxon>
        <taxon>asterids</taxon>
        <taxon>lamiids</taxon>
        <taxon>Solanales</taxon>
        <taxon>Solanaceae</taxon>
        <taxon>Solanoideae</taxon>
        <taxon>Solaneae</taxon>
        <taxon>Solanum</taxon>
        <taxon>Solanum subgen. Lycopersicon</taxon>
    </lineage>
</organism>
<name>CWP05_SOLLC</name>
<evidence type="ECO:0000269" key="1">
    <source>
    </source>
</evidence>
<evidence type="ECO:0000303" key="2">
    <source>
    </source>
</evidence>
<evidence type="ECO:0000305" key="3"/>
<dbReference type="InParanoid" id="P80802"/>
<dbReference type="Proteomes" id="UP000004994">
    <property type="component" value="Unplaced"/>
</dbReference>
<dbReference type="GO" id="GO:0005576">
    <property type="term" value="C:extracellular region"/>
    <property type="evidence" value="ECO:0007669"/>
    <property type="project" value="UniProtKB-KW"/>
</dbReference>